<organism>
    <name type="scientific">Bacillus cereus (strain AH820)</name>
    <dbReference type="NCBI Taxonomy" id="405535"/>
    <lineage>
        <taxon>Bacteria</taxon>
        <taxon>Bacillati</taxon>
        <taxon>Bacillota</taxon>
        <taxon>Bacilli</taxon>
        <taxon>Bacillales</taxon>
        <taxon>Bacillaceae</taxon>
        <taxon>Bacillus</taxon>
        <taxon>Bacillus cereus group</taxon>
    </lineage>
</organism>
<dbReference type="EC" id="7.1.2.2" evidence="1"/>
<dbReference type="EMBL" id="CP001283">
    <property type="protein sequence ID" value="ACK88830.1"/>
    <property type="molecule type" value="Genomic_DNA"/>
</dbReference>
<dbReference type="RefSeq" id="WP_001032599.1">
    <property type="nucleotide sequence ID" value="NC_011773.1"/>
</dbReference>
<dbReference type="SMR" id="B7JGN0"/>
<dbReference type="KEGG" id="bcu:BCAH820_5396"/>
<dbReference type="HOGENOM" id="CLU_022398_0_2_9"/>
<dbReference type="Proteomes" id="UP000001363">
    <property type="component" value="Chromosome"/>
</dbReference>
<dbReference type="GO" id="GO:0005886">
    <property type="term" value="C:plasma membrane"/>
    <property type="evidence" value="ECO:0007669"/>
    <property type="project" value="UniProtKB-SubCell"/>
</dbReference>
<dbReference type="GO" id="GO:0045259">
    <property type="term" value="C:proton-transporting ATP synthase complex"/>
    <property type="evidence" value="ECO:0007669"/>
    <property type="project" value="UniProtKB-KW"/>
</dbReference>
<dbReference type="GO" id="GO:0005524">
    <property type="term" value="F:ATP binding"/>
    <property type="evidence" value="ECO:0007669"/>
    <property type="project" value="UniProtKB-UniRule"/>
</dbReference>
<dbReference type="GO" id="GO:0016887">
    <property type="term" value="F:ATP hydrolysis activity"/>
    <property type="evidence" value="ECO:0007669"/>
    <property type="project" value="InterPro"/>
</dbReference>
<dbReference type="GO" id="GO:0046933">
    <property type="term" value="F:proton-transporting ATP synthase activity, rotational mechanism"/>
    <property type="evidence" value="ECO:0007669"/>
    <property type="project" value="UniProtKB-UniRule"/>
</dbReference>
<dbReference type="CDD" id="cd18110">
    <property type="entry name" value="ATP-synt_F1_beta_C"/>
    <property type="match status" value="1"/>
</dbReference>
<dbReference type="CDD" id="cd18115">
    <property type="entry name" value="ATP-synt_F1_beta_N"/>
    <property type="match status" value="1"/>
</dbReference>
<dbReference type="CDD" id="cd01133">
    <property type="entry name" value="F1-ATPase_beta_CD"/>
    <property type="match status" value="1"/>
</dbReference>
<dbReference type="FunFam" id="1.10.1140.10:FF:000001">
    <property type="entry name" value="ATP synthase subunit beta"/>
    <property type="match status" value="1"/>
</dbReference>
<dbReference type="FunFam" id="2.40.10.170:FF:000005">
    <property type="entry name" value="ATP synthase subunit beta"/>
    <property type="match status" value="1"/>
</dbReference>
<dbReference type="FunFam" id="3.40.50.300:FF:000004">
    <property type="entry name" value="ATP synthase subunit beta"/>
    <property type="match status" value="1"/>
</dbReference>
<dbReference type="Gene3D" id="2.40.10.170">
    <property type="match status" value="1"/>
</dbReference>
<dbReference type="Gene3D" id="1.10.1140.10">
    <property type="entry name" value="Bovine Mitochondrial F1-atpase, Atp Synthase Beta Chain, Chain D, domain 3"/>
    <property type="match status" value="1"/>
</dbReference>
<dbReference type="Gene3D" id="3.40.50.300">
    <property type="entry name" value="P-loop containing nucleotide triphosphate hydrolases"/>
    <property type="match status" value="1"/>
</dbReference>
<dbReference type="HAMAP" id="MF_01347">
    <property type="entry name" value="ATP_synth_beta_bact"/>
    <property type="match status" value="1"/>
</dbReference>
<dbReference type="InterPro" id="IPR003593">
    <property type="entry name" value="AAA+_ATPase"/>
</dbReference>
<dbReference type="InterPro" id="IPR055190">
    <property type="entry name" value="ATP-synt_VA_C"/>
</dbReference>
<dbReference type="InterPro" id="IPR005722">
    <property type="entry name" value="ATP_synth_F1_bsu"/>
</dbReference>
<dbReference type="InterPro" id="IPR020003">
    <property type="entry name" value="ATPase_a/bsu_AS"/>
</dbReference>
<dbReference type="InterPro" id="IPR050053">
    <property type="entry name" value="ATPase_alpha/beta_chains"/>
</dbReference>
<dbReference type="InterPro" id="IPR004100">
    <property type="entry name" value="ATPase_F1/V1/A1_a/bsu_N"/>
</dbReference>
<dbReference type="InterPro" id="IPR036121">
    <property type="entry name" value="ATPase_F1/V1/A1_a/bsu_N_sf"/>
</dbReference>
<dbReference type="InterPro" id="IPR000194">
    <property type="entry name" value="ATPase_F1/V1/A1_a/bsu_nucl-bd"/>
</dbReference>
<dbReference type="InterPro" id="IPR024034">
    <property type="entry name" value="ATPase_F1/V1_b/a_C"/>
</dbReference>
<dbReference type="InterPro" id="IPR027417">
    <property type="entry name" value="P-loop_NTPase"/>
</dbReference>
<dbReference type="NCBIfam" id="TIGR01039">
    <property type="entry name" value="atpD"/>
    <property type="match status" value="1"/>
</dbReference>
<dbReference type="PANTHER" id="PTHR15184">
    <property type="entry name" value="ATP SYNTHASE"/>
    <property type="match status" value="1"/>
</dbReference>
<dbReference type="PANTHER" id="PTHR15184:SF71">
    <property type="entry name" value="ATP SYNTHASE SUBUNIT BETA, MITOCHONDRIAL"/>
    <property type="match status" value="1"/>
</dbReference>
<dbReference type="Pfam" id="PF00006">
    <property type="entry name" value="ATP-synt_ab"/>
    <property type="match status" value="1"/>
</dbReference>
<dbReference type="Pfam" id="PF02874">
    <property type="entry name" value="ATP-synt_ab_N"/>
    <property type="match status" value="1"/>
</dbReference>
<dbReference type="Pfam" id="PF22919">
    <property type="entry name" value="ATP-synt_VA_C"/>
    <property type="match status" value="1"/>
</dbReference>
<dbReference type="SMART" id="SM00382">
    <property type="entry name" value="AAA"/>
    <property type="match status" value="1"/>
</dbReference>
<dbReference type="SUPFAM" id="SSF47917">
    <property type="entry name" value="C-terminal domain of alpha and beta subunits of F1 ATP synthase"/>
    <property type="match status" value="1"/>
</dbReference>
<dbReference type="SUPFAM" id="SSF50615">
    <property type="entry name" value="N-terminal domain of alpha and beta subunits of F1 ATP synthase"/>
    <property type="match status" value="1"/>
</dbReference>
<dbReference type="SUPFAM" id="SSF52540">
    <property type="entry name" value="P-loop containing nucleoside triphosphate hydrolases"/>
    <property type="match status" value="1"/>
</dbReference>
<dbReference type="PROSITE" id="PS00152">
    <property type="entry name" value="ATPASE_ALPHA_BETA"/>
    <property type="match status" value="1"/>
</dbReference>
<reference key="1">
    <citation type="submission" date="2008-10" db="EMBL/GenBank/DDBJ databases">
        <title>Genome sequence of Bacillus cereus AH820.</title>
        <authorList>
            <person name="Dodson R.J."/>
            <person name="Durkin A.S."/>
            <person name="Rosovitz M.J."/>
            <person name="Rasko D.A."/>
            <person name="Hoffmaster A."/>
            <person name="Ravel J."/>
            <person name="Sutton G."/>
        </authorList>
    </citation>
    <scope>NUCLEOTIDE SEQUENCE [LARGE SCALE GENOMIC DNA]</scope>
    <source>
        <strain>AH820</strain>
    </source>
</reference>
<name>ATPB_BACC0</name>
<comment type="function">
    <text evidence="1">Produces ATP from ADP in the presence of a proton gradient across the membrane. The catalytic sites are hosted primarily by the beta subunits.</text>
</comment>
<comment type="catalytic activity">
    <reaction evidence="1">
        <text>ATP + H2O + 4 H(+)(in) = ADP + phosphate + 5 H(+)(out)</text>
        <dbReference type="Rhea" id="RHEA:57720"/>
        <dbReference type="ChEBI" id="CHEBI:15377"/>
        <dbReference type="ChEBI" id="CHEBI:15378"/>
        <dbReference type="ChEBI" id="CHEBI:30616"/>
        <dbReference type="ChEBI" id="CHEBI:43474"/>
        <dbReference type="ChEBI" id="CHEBI:456216"/>
        <dbReference type="EC" id="7.1.2.2"/>
    </reaction>
</comment>
<comment type="subunit">
    <text evidence="1">F-type ATPases have 2 components, CF(1) - the catalytic core - and CF(0) - the membrane proton channel. CF(1) has five subunits: alpha(3), beta(3), gamma(1), delta(1), epsilon(1). CF(0) has three main subunits: a(1), b(2) and c(9-12). The alpha and beta chains form an alternating ring which encloses part of the gamma chain. CF(1) is attached to CF(0) by a central stalk formed by the gamma and epsilon chains, while a peripheral stalk is formed by the delta and b chains.</text>
</comment>
<comment type="subcellular location">
    <subcellularLocation>
        <location evidence="1">Cell membrane</location>
        <topology evidence="1">Peripheral membrane protein</topology>
    </subcellularLocation>
</comment>
<comment type="similarity">
    <text evidence="1">Belongs to the ATPase alpha/beta chains family.</text>
</comment>
<sequence>MNKGRVTQIMGPVVDVKFDGGKLPEIYNALTVKQSNENGTSINLTFEVALHLGDDTVRTVAMSSTDGLVRGTEVEDTGKAISVPVGDATLGRVFNVLGDAIDLDGEVPADVRRDPIHRQAPAFEELSTKVEILETGIKVVDLLAPYIKGGKIGLFGGAGVGKTVLIQELINNIAQEHGGISVFAGVGERTREGNDLYHEMSDSGVIKKTAMVFGQMNEPPGARQRVALTGLTMAEHFRDEQGQDVLLFIDNIFRFTQAGSEVSALLGRMPSAVGYQPTLATEMGQLQERITSTNKGSITSIQAVYVPADDYTDPAPATTFAHLDATTNLERRLTQMGIYPAVDPLASTSRALSPEIVGEEHYEVARQVQQTLQRYKELQDIIAILGMDELSEEDKLVVHRARRIQFFLSQNFHVAEQFTGQKGSYVPVKDTVRGFKEILEGKYDDLPEDAFRLVGGIEEVIENAKKMMA</sequence>
<proteinExistence type="inferred from homology"/>
<accession>B7JGN0</accession>
<feature type="chain" id="PRO_1000143473" description="ATP synthase subunit beta">
    <location>
        <begin position="1"/>
        <end position="469"/>
    </location>
</feature>
<feature type="binding site" evidence="1">
    <location>
        <begin position="156"/>
        <end position="163"/>
    </location>
    <ligand>
        <name>ATP</name>
        <dbReference type="ChEBI" id="CHEBI:30616"/>
    </ligand>
</feature>
<gene>
    <name evidence="1" type="primary">atpD</name>
    <name type="ordered locus">BCAH820_5396</name>
</gene>
<keyword id="KW-0066">ATP synthesis</keyword>
<keyword id="KW-0067">ATP-binding</keyword>
<keyword id="KW-1003">Cell membrane</keyword>
<keyword id="KW-0139">CF(1)</keyword>
<keyword id="KW-0375">Hydrogen ion transport</keyword>
<keyword id="KW-0406">Ion transport</keyword>
<keyword id="KW-0472">Membrane</keyword>
<keyword id="KW-0547">Nucleotide-binding</keyword>
<keyword id="KW-1278">Translocase</keyword>
<keyword id="KW-0813">Transport</keyword>
<protein>
    <recommendedName>
        <fullName evidence="1">ATP synthase subunit beta</fullName>
        <ecNumber evidence="1">7.1.2.2</ecNumber>
    </recommendedName>
    <alternativeName>
        <fullName evidence="1">ATP synthase F1 sector subunit beta</fullName>
    </alternativeName>
    <alternativeName>
        <fullName evidence="1">F-ATPase subunit beta</fullName>
    </alternativeName>
</protein>
<evidence type="ECO:0000255" key="1">
    <source>
        <dbReference type="HAMAP-Rule" id="MF_01347"/>
    </source>
</evidence>